<proteinExistence type="inferred from homology"/>
<name>RS14Z_BORRA</name>
<feature type="chain" id="PRO_1000143889" description="Small ribosomal subunit protein uS14">
    <location>
        <begin position="1"/>
        <end position="61"/>
    </location>
</feature>
<feature type="binding site" evidence="1">
    <location>
        <position position="24"/>
    </location>
    <ligand>
        <name>Zn(2+)</name>
        <dbReference type="ChEBI" id="CHEBI:29105"/>
    </ligand>
</feature>
<feature type="binding site" evidence="1">
    <location>
        <position position="27"/>
    </location>
    <ligand>
        <name>Zn(2+)</name>
        <dbReference type="ChEBI" id="CHEBI:29105"/>
    </ligand>
</feature>
<feature type="binding site" evidence="1">
    <location>
        <position position="40"/>
    </location>
    <ligand>
        <name>Zn(2+)</name>
        <dbReference type="ChEBI" id="CHEBI:29105"/>
    </ligand>
</feature>
<feature type="binding site" evidence="1">
    <location>
        <position position="43"/>
    </location>
    <ligand>
        <name>Zn(2+)</name>
        <dbReference type="ChEBI" id="CHEBI:29105"/>
    </ligand>
</feature>
<organism>
    <name type="scientific">Borrelia recurrentis (strain A1)</name>
    <dbReference type="NCBI Taxonomy" id="412418"/>
    <lineage>
        <taxon>Bacteria</taxon>
        <taxon>Pseudomonadati</taxon>
        <taxon>Spirochaetota</taxon>
        <taxon>Spirochaetia</taxon>
        <taxon>Spirochaetales</taxon>
        <taxon>Borreliaceae</taxon>
        <taxon>Borrelia</taxon>
    </lineage>
</organism>
<evidence type="ECO:0000255" key="1">
    <source>
        <dbReference type="HAMAP-Rule" id="MF_01364"/>
    </source>
</evidence>
<evidence type="ECO:0000305" key="2"/>
<accession>B5RPJ5</accession>
<sequence>MAKKSMIVKALRKPKYKTRQKNRCKLCGRPKGYMRDFSMCRICFRNHASAGLIPGVSKSSW</sequence>
<dbReference type="EMBL" id="CP000993">
    <property type="protein sequence ID" value="ACH94729.1"/>
    <property type="molecule type" value="Genomic_DNA"/>
</dbReference>
<dbReference type="RefSeq" id="WP_012538245.1">
    <property type="nucleotide sequence ID" value="NZ_CP169983.1"/>
</dbReference>
<dbReference type="SMR" id="B5RPJ5"/>
<dbReference type="KEGG" id="bre:BRE_497"/>
<dbReference type="HOGENOM" id="CLU_139869_3_0_12"/>
<dbReference type="Proteomes" id="UP000000612">
    <property type="component" value="Chromosome"/>
</dbReference>
<dbReference type="GO" id="GO:0005737">
    <property type="term" value="C:cytoplasm"/>
    <property type="evidence" value="ECO:0007669"/>
    <property type="project" value="UniProtKB-ARBA"/>
</dbReference>
<dbReference type="GO" id="GO:0015935">
    <property type="term" value="C:small ribosomal subunit"/>
    <property type="evidence" value="ECO:0007669"/>
    <property type="project" value="TreeGrafter"/>
</dbReference>
<dbReference type="GO" id="GO:0019843">
    <property type="term" value="F:rRNA binding"/>
    <property type="evidence" value="ECO:0007669"/>
    <property type="project" value="UniProtKB-UniRule"/>
</dbReference>
<dbReference type="GO" id="GO:0003735">
    <property type="term" value="F:structural constituent of ribosome"/>
    <property type="evidence" value="ECO:0007669"/>
    <property type="project" value="InterPro"/>
</dbReference>
<dbReference type="GO" id="GO:0008270">
    <property type="term" value="F:zinc ion binding"/>
    <property type="evidence" value="ECO:0007669"/>
    <property type="project" value="UniProtKB-UniRule"/>
</dbReference>
<dbReference type="GO" id="GO:0006412">
    <property type="term" value="P:translation"/>
    <property type="evidence" value="ECO:0007669"/>
    <property type="project" value="UniProtKB-UniRule"/>
</dbReference>
<dbReference type="FunFam" id="4.10.830.10:FF:000001">
    <property type="entry name" value="30S ribosomal protein S14 type Z"/>
    <property type="match status" value="1"/>
</dbReference>
<dbReference type="Gene3D" id="4.10.830.10">
    <property type="entry name" value="30s Ribosomal Protein S14, Chain N"/>
    <property type="match status" value="1"/>
</dbReference>
<dbReference type="HAMAP" id="MF_01364_B">
    <property type="entry name" value="Ribosomal_uS14_2_B"/>
    <property type="match status" value="1"/>
</dbReference>
<dbReference type="InterPro" id="IPR001209">
    <property type="entry name" value="Ribosomal_uS14"/>
</dbReference>
<dbReference type="InterPro" id="IPR023053">
    <property type="entry name" value="Ribosomal_uS14_bact"/>
</dbReference>
<dbReference type="InterPro" id="IPR018271">
    <property type="entry name" value="Ribosomal_uS14_CS"/>
</dbReference>
<dbReference type="InterPro" id="IPR043140">
    <property type="entry name" value="Ribosomal_uS14_sf"/>
</dbReference>
<dbReference type="NCBIfam" id="NF005974">
    <property type="entry name" value="PRK08061.1"/>
    <property type="match status" value="1"/>
</dbReference>
<dbReference type="PANTHER" id="PTHR19836">
    <property type="entry name" value="30S RIBOSOMAL PROTEIN S14"/>
    <property type="match status" value="1"/>
</dbReference>
<dbReference type="PANTHER" id="PTHR19836:SF19">
    <property type="entry name" value="SMALL RIBOSOMAL SUBUNIT PROTEIN US14M"/>
    <property type="match status" value="1"/>
</dbReference>
<dbReference type="Pfam" id="PF00253">
    <property type="entry name" value="Ribosomal_S14"/>
    <property type="match status" value="1"/>
</dbReference>
<dbReference type="SUPFAM" id="SSF57716">
    <property type="entry name" value="Glucocorticoid receptor-like (DNA-binding domain)"/>
    <property type="match status" value="1"/>
</dbReference>
<dbReference type="PROSITE" id="PS00527">
    <property type="entry name" value="RIBOSOMAL_S14"/>
    <property type="match status" value="1"/>
</dbReference>
<comment type="function">
    <text evidence="1">Binds 16S rRNA, required for the assembly of 30S particles and may also be responsible for determining the conformation of the 16S rRNA at the A site.</text>
</comment>
<comment type="cofactor">
    <cofactor evidence="1">
        <name>Zn(2+)</name>
        <dbReference type="ChEBI" id="CHEBI:29105"/>
    </cofactor>
    <text evidence="1">Binds 1 zinc ion per subunit.</text>
</comment>
<comment type="subunit">
    <text evidence="1">Part of the 30S ribosomal subunit. Contacts proteins S3 and S10.</text>
</comment>
<comment type="similarity">
    <text evidence="1">Belongs to the universal ribosomal protein uS14 family. Zinc-binding uS14 subfamily.</text>
</comment>
<gene>
    <name evidence="1" type="primary">rpsZ</name>
    <name evidence="1" type="synonym">rpsN</name>
    <name type="ordered locus">BRE_497</name>
</gene>
<protein>
    <recommendedName>
        <fullName evidence="1">Small ribosomal subunit protein uS14</fullName>
    </recommendedName>
    <alternativeName>
        <fullName evidence="2">30S ribosomal protein S14 type Z</fullName>
    </alternativeName>
</protein>
<reference key="1">
    <citation type="journal article" date="2008" name="PLoS Genet.">
        <title>The genome of Borrelia recurrentis, the agent of deadly louse-borne relapsing fever, is a degraded subset of tick-borne Borrelia duttonii.</title>
        <authorList>
            <person name="Lescot M."/>
            <person name="Audic S."/>
            <person name="Robert C."/>
            <person name="Nguyen T.T."/>
            <person name="Blanc G."/>
            <person name="Cutler S.J."/>
            <person name="Wincker P."/>
            <person name="Couloux A."/>
            <person name="Claverie J.-M."/>
            <person name="Raoult D."/>
            <person name="Drancourt M."/>
        </authorList>
    </citation>
    <scope>NUCLEOTIDE SEQUENCE [LARGE SCALE GENOMIC DNA]</scope>
    <source>
        <strain>A1</strain>
    </source>
</reference>
<keyword id="KW-0479">Metal-binding</keyword>
<keyword id="KW-0687">Ribonucleoprotein</keyword>
<keyword id="KW-0689">Ribosomal protein</keyword>
<keyword id="KW-0694">RNA-binding</keyword>
<keyword id="KW-0699">rRNA-binding</keyword>
<keyword id="KW-0862">Zinc</keyword>